<protein>
    <recommendedName>
        <fullName evidence="1">Large ribosomal subunit protein eL40</fullName>
    </recommendedName>
    <alternativeName>
        <fullName evidence="2">50S ribosomal protein L40e</fullName>
    </alternativeName>
</protein>
<sequence>MAFEEAMNRVFHKKICLRCTARNPWKATKCRKCGYTKLRPKAKESRG</sequence>
<comment type="similarity">
    <text evidence="1">Belongs to the eukaryotic ribosomal protein eL40 family.</text>
</comment>
<proteinExistence type="inferred from homology"/>
<accession>A6UUS7</accession>
<keyword id="KW-0687">Ribonucleoprotein</keyword>
<keyword id="KW-0689">Ribosomal protein</keyword>
<evidence type="ECO:0000255" key="1">
    <source>
        <dbReference type="HAMAP-Rule" id="MF_00788"/>
    </source>
</evidence>
<evidence type="ECO:0000305" key="2"/>
<organism>
    <name type="scientific">Methanococcus aeolicus (strain ATCC BAA-1280 / DSM 17508 / OCM 812 / Nankai-3)</name>
    <dbReference type="NCBI Taxonomy" id="419665"/>
    <lineage>
        <taxon>Archaea</taxon>
        <taxon>Methanobacteriati</taxon>
        <taxon>Methanobacteriota</taxon>
        <taxon>Methanomada group</taxon>
        <taxon>Methanococci</taxon>
        <taxon>Methanococcales</taxon>
        <taxon>Methanococcaceae</taxon>
        <taxon>Methanococcus</taxon>
    </lineage>
</organism>
<name>RL40_META3</name>
<reference key="1">
    <citation type="submission" date="2007-06" db="EMBL/GenBank/DDBJ databases">
        <title>Complete sequence of Methanococcus aeolicus Nankai-3.</title>
        <authorList>
            <consortium name="US DOE Joint Genome Institute"/>
            <person name="Copeland A."/>
            <person name="Lucas S."/>
            <person name="Lapidus A."/>
            <person name="Barry K."/>
            <person name="Glavina del Rio T."/>
            <person name="Dalin E."/>
            <person name="Tice H."/>
            <person name="Pitluck S."/>
            <person name="Chain P."/>
            <person name="Malfatti S."/>
            <person name="Shin M."/>
            <person name="Vergez L."/>
            <person name="Schmutz J."/>
            <person name="Larimer F."/>
            <person name="Land M."/>
            <person name="Hauser L."/>
            <person name="Kyrpides N."/>
            <person name="Lykidis A."/>
            <person name="Sieprawska-Lupa M."/>
            <person name="Whitman W.B."/>
            <person name="Richardson P."/>
        </authorList>
    </citation>
    <scope>NUCLEOTIDE SEQUENCE [LARGE SCALE GENOMIC DNA]</scope>
    <source>
        <strain>ATCC BAA-1280 / DSM 17508 / OCM 812 / Nankai-3</strain>
    </source>
</reference>
<gene>
    <name evidence="1" type="primary">rpl40e</name>
    <name type="ordered locus">Maeo_0665</name>
</gene>
<feature type="chain" id="PRO_1000046879" description="Large ribosomal subunit protein eL40">
    <location>
        <begin position="1"/>
        <end position="47"/>
    </location>
</feature>
<dbReference type="EMBL" id="CP000743">
    <property type="protein sequence ID" value="ABR56249.1"/>
    <property type="molecule type" value="Genomic_DNA"/>
</dbReference>
<dbReference type="RefSeq" id="WP_011973381.1">
    <property type="nucleotide sequence ID" value="NC_009635.1"/>
</dbReference>
<dbReference type="SMR" id="A6UUS7"/>
<dbReference type="STRING" id="419665.Maeo_0665"/>
<dbReference type="GeneID" id="5327229"/>
<dbReference type="KEGG" id="mae:Maeo_0665"/>
<dbReference type="eggNOG" id="arCOG04049">
    <property type="taxonomic scope" value="Archaea"/>
</dbReference>
<dbReference type="HOGENOM" id="CLU_205640_0_0_2"/>
<dbReference type="OrthoDB" id="45138at2157"/>
<dbReference type="Proteomes" id="UP000001106">
    <property type="component" value="Chromosome"/>
</dbReference>
<dbReference type="GO" id="GO:1990904">
    <property type="term" value="C:ribonucleoprotein complex"/>
    <property type="evidence" value="ECO:0007669"/>
    <property type="project" value="UniProtKB-KW"/>
</dbReference>
<dbReference type="GO" id="GO:0005840">
    <property type="term" value="C:ribosome"/>
    <property type="evidence" value="ECO:0007669"/>
    <property type="project" value="UniProtKB-KW"/>
</dbReference>
<dbReference type="GO" id="GO:0003735">
    <property type="term" value="F:structural constituent of ribosome"/>
    <property type="evidence" value="ECO:0007669"/>
    <property type="project" value="InterPro"/>
</dbReference>
<dbReference type="GO" id="GO:0006412">
    <property type="term" value="P:translation"/>
    <property type="evidence" value="ECO:0007669"/>
    <property type="project" value="UniProtKB-UniRule"/>
</dbReference>
<dbReference type="Gene3D" id="4.10.1060.50">
    <property type="match status" value="1"/>
</dbReference>
<dbReference type="HAMAP" id="MF_00788">
    <property type="entry name" value="Ribosomal_eL40"/>
    <property type="match status" value="1"/>
</dbReference>
<dbReference type="InterPro" id="IPR023657">
    <property type="entry name" value="Ribosomal_eL40_arc"/>
</dbReference>
<dbReference type="InterPro" id="IPR001975">
    <property type="entry name" value="Ribosomal_eL40_dom"/>
</dbReference>
<dbReference type="InterPro" id="IPR038587">
    <property type="entry name" value="Ribosomal_eL40_sf"/>
</dbReference>
<dbReference type="InterPro" id="IPR011332">
    <property type="entry name" value="Ribosomal_zn-bd"/>
</dbReference>
<dbReference type="NCBIfam" id="NF003161">
    <property type="entry name" value="PRK04136.1"/>
    <property type="match status" value="1"/>
</dbReference>
<dbReference type="PANTHER" id="PTHR39649">
    <property type="entry name" value="50S RIBOSOMAL PROTEIN L40E"/>
    <property type="match status" value="1"/>
</dbReference>
<dbReference type="PANTHER" id="PTHR39649:SF1">
    <property type="entry name" value="LARGE RIBOSOMAL SUBUNIT PROTEIN EL40"/>
    <property type="match status" value="1"/>
</dbReference>
<dbReference type="Pfam" id="PF01020">
    <property type="entry name" value="Ribosomal_L40e"/>
    <property type="match status" value="1"/>
</dbReference>
<dbReference type="SMART" id="SM01377">
    <property type="entry name" value="Ribosomal_L40e"/>
    <property type="match status" value="1"/>
</dbReference>
<dbReference type="SUPFAM" id="SSF57829">
    <property type="entry name" value="Zn-binding ribosomal proteins"/>
    <property type="match status" value="1"/>
</dbReference>